<evidence type="ECO:0000255" key="1">
    <source>
        <dbReference type="HAMAP-Rule" id="MF_00454"/>
    </source>
</evidence>
<comment type="function">
    <text evidence="1">Fluoride-specific ion channel. Important for reducing fluoride concentration in the cell, thus reducing its toxicity.</text>
</comment>
<comment type="catalytic activity">
    <reaction evidence="1">
        <text>fluoride(in) = fluoride(out)</text>
        <dbReference type="Rhea" id="RHEA:76159"/>
        <dbReference type="ChEBI" id="CHEBI:17051"/>
    </reaction>
    <physiologicalReaction direction="left-to-right" evidence="1">
        <dbReference type="Rhea" id="RHEA:76160"/>
    </physiologicalReaction>
</comment>
<comment type="activity regulation">
    <text evidence="1">Na(+) is not transported, but it plays an essential structural role and its presence is essential for fluoride channel function.</text>
</comment>
<comment type="subcellular location">
    <subcellularLocation>
        <location evidence="1">Cell inner membrane</location>
        <topology evidence="1">Multi-pass membrane protein</topology>
    </subcellularLocation>
</comment>
<comment type="similarity">
    <text evidence="1">Belongs to the fluoride channel Fluc/FEX (TC 1.A.43) family.</text>
</comment>
<dbReference type="EMBL" id="AE008917">
    <property type="protein sequence ID" value="AAL51814.1"/>
    <property type="molecule type" value="Genomic_DNA"/>
</dbReference>
<dbReference type="PIR" id="AC3331">
    <property type="entry name" value="AC3331"/>
</dbReference>
<dbReference type="SMR" id="Q8YI12"/>
<dbReference type="KEGG" id="bme:BMEI0633"/>
<dbReference type="eggNOG" id="COG0239">
    <property type="taxonomic scope" value="Bacteria"/>
</dbReference>
<dbReference type="PhylomeDB" id="Q8YI12"/>
<dbReference type="Proteomes" id="UP000000419">
    <property type="component" value="Chromosome I"/>
</dbReference>
<dbReference type="GO" id="GO:0005886">
    <property type="term" value="C:plasma membrane"/>
    <property type="evidence" value="ECO:0007669"/>
    <property type="project" value="UniProtKB-SubCell"/>
</dbReference>
<dbReference type="GO" id="GO:0062054">
    <property type="term" value="F:fluoride channel activity"/>
    <property type="evidence" value="ECO:0007669"/>
    <property type="project" value="UniProtKB-UniRule"/>
</dbReference>
<dbReference type="GO" id="GO:0046872">
    <property type="term" value="F:metal ion binding"/>
    <property type="evidence" value="ECO:0007669"/>
    <property type="project" value="UniProtKB-KW"/>
</dbReference>
<dbReference type="GO" id="GO:0140114">
    <property type="term" value="P:cellular detoxification of fluoride"/>
    <property type="evidence" value="ECO:0007669"/>
    <property type="project" value="UniProtKB-UniRule"/>
</dbReference>
<dbReference type="HAMAP" id="MF_00454">
    <property type="entry name" value="FluC"/>
    <property type="match status" value="1"/>
</dbReference>
<dbReference type="InterPro" id="IPR003691">
    <property type="entry name" value="FluC"/>
</dbReference>
<dbReference type="NCBIfam" id="TIGR00494">
    <property type="entry name" value="crcB"/>
    <property type="match status" value="1"/>
</dbReference>
<dbReference type="PANTHER" id="PTHR28259">
    <property type="entry name" value="FLUORIDE EXPORT PROTEIN 1-RELATED"/>
    <property type="match status" value="1"/>
</dbReference>
<dbReference type="PANTHER" id="PTHR28259:SF18">
    <property type="entry name" value="FLUORIDE-SPECIFIC ION CHANNEL FLUC"/>
    <property type="match status" value="1"/>
</dbReference>
<dbReference type="Pfam" id="PF02537">
    <property type="entry name" value="CRCB"/>
    <property type="match status" value="1"/>
</dbReference>
<name>FLUC1_BRUME</name>
<reference key="1">
    <citation type="journal article" date="2002" name="Proc. Natl. Acad. Sci. U.S.A.">
        <title>The genome sequence of the facultative intracellular pathogen Brucella melitensis.</title>
        <authorList>
            <person name="DelVecchio V.G."/>
            <person name="Kapatral V."/>
            <person name="Redkar R.J."/>
            <person name="Patra G."/>
            <person name="Mujer C."/>
            <person name="Los T."/>
            <person name="Ivanova N."/>
            <person name="Anderson I."/>
            <person name="Bhattacharyya A."/>
            <person name="Lykidis A."/>
            <person name="Reznik G."/>
            <person name="Jablonski L."/>
            <person name="Larsen N."/>
            <person name="D'Souza M."/>
            <person name="Bernal A."/>
            <person name="Mazur M."/>
            <person name="Goltsman E."/>
            <person name="Selkov E."/>
            <person name="Elzer P.H."/>
            <person name="Hagius S."/>
            <person name="O'Callaghan D."/>
            <person name="Letesson J.-J."/>
            <person name="Haselkorn R."/>
            <person name="Kyrpides N.C."/>
            <person name="Overbeek R."/>
        </authorList>
    </citation>
    <scope>NUCLEOTIDE SEQUENCE [LARGE SCALE GENOMIC DNA]</scope>
    <source>
        <strain>ATCC 23456 / CCUG 17765 / NCTC 10094 / 16M</strain>
    </source>
</reference>
<proteinExistence type="inferred from homology"/>
<accession>Q8YI12</accession>
<feature type="chain" id="PRO_0000110071" description="Fluoride-specific ion channel FluC 1">
    <location>
        <begin position="1"/>
        <end position="123"/>
    </location>
</feature>
<feature type="transmembrane region" description="Helical" evidence="1">
    <location>
        <begin position="33"/>
        <end position="53"/>
    </location>
</feature>
<feature type="transmembrane region" description="Helical" evidence="1">
    <location>
        <begin position="59"/>
        <end position="79"/>
    </location>
</feature>
<feature type="transmembrane region" description="Helical" evidence="1">
    <location>
        <begin position="98"/>
        <end position="118"/>
    </location>
</feature>
<feature type="binding site" evidence="1">
    <location>
        <position position="73"/>
    </location>
    <ligand>
        <name>Na(+)</name>
        <dbReference type="ChEBI" id="CHEBI:29101"/>
        <note>structural</note>
    </ligand>
</feature>
<feature type="binding site" evidence="1">
    <location>
        <position position="76"/>
    </location>
    <ligand>
        <name>Na(+)</name>
        <dbReference type="ChEBI" id="CHEBI:29101"/>
        <note>structural</note>
    </ligand>
</feature>
<protein>
    <recommendedName>
        <fullName evidence="1">Fluoride-specific ion channel FluC 1</fullName>
    </recommendedName>
</protein>
<gene>
    <name evidence="1" type="primary">fluC1</name>
    <name evidence="1" type="synonym">crcB1</name>
    <name type="ordered locus">BMEI0633</name>
</gene>
<organism>
    <name type="scientific">Brucella melitensis biotype 1 (strain ATCC 23456 / CCUG 17765 / NCTC 10094 / 16M)</name>
    <dbReference type="NCBI Taxonomy" id="224914"/>
    <lineage>
        <taxon>Bacteria</taxon>
        <taxon>Pseudomonadati</taxon>
        <taxon>Pseudomonadota</taxon>
        <taxon>Alphaproteobacteria</taxon>
        <taxon>Hyphomicrobiales</taxon>
        <taxon>Brucellaceae</taxon>
        <taxon>Brucella/Ochrobactrum group</taxon>
        <taxon>Brucella</taxon>
    </lineage>
</organism>
<keyword id="KW-0997">Cell inner membrane</keyword>
<keyword id="KW-1003">Cell membrane</keyword>
<keyword id="KW-0407">Ion channel</keyword>
<keyword id="KW-0406">Ion transport</keyword>
<keyword id="KW-0472">Membrane</keyword>
<keyword id="KW-0479">Metal-binding</keyword>
<keyword id="KW-0915">Sodium</keyword>
<keyword id="KW-0812">Transmembrane</keyword>
<keyword id="KW-1133">Transmembrane helix</keyword>
<keyword id="KW-0813">Transport</keyword>
<sequence>MWVGLGGGVGSLGRWWIGRIVGEYHHGAFPLGTFLINISGAFVIGYLSVLFGVDWHDRYGTMLNAGVLTGILGGYTTFSSMQLDAVKLSHKGQGGLAVFYLVASVLSGLFAAWLGAMLAHLQG</sequence>